<gene>
    <name type="primary">zcrb1</name>
</gene>
<dbReference type="EMBL" id="BC075189">
    <property type="protein sequence ID" value="AAH75189.1"/>
    <property type="molecule type" value="mRNA"/>
</dbReference>
<dbReference type="RefSeq" id="NP_001086476.1">
    <property type="nucleotide sequence ID" value="NM_001093007.1"/>
</dbReference>
<dbReference type="SMR" id="Q6DJI9"/>
<dbReference type="DNASU" id="446310"/>
<dbReference type="GeneID" id="446310"/>
<dbReference type="KEGG" id="xla:446310"/>
<dbReference type="AGR" id="Xenbase:XB-GENE-6251504"/>
<dbReference type="CTD" id="446310"/>
<dbReference type="Xenbase" id="XB-GENE-6251504">
    <property type="gene designation" value="zcrb1.L"/>
</dbReference>
<dbReference type="OMA" id="AHYFNDE"/>
<dbReference type="OrthoDB" id="267048at2759"/>
<dbReference type="Proteomes" id="UP000186698">
    <property type="component" value="Chromosome 3L"/>
</dbReference>
<dbReference type="Bgee" id="446310">
    <property type="expression patterns" value="Expressed in gastrula and 19 other cell types or tissues"/>
</dbReference>
<dbReference type="GO" id="GO:0005689">
    <property type="term" value="C:U12-type spliceosomal complex"/>
    <property type="evidence" value="ECO:0000318"/>
    <property type="project" value="GO_Central"/>
</dbReference>
<dbReference type="GO" id="GO:0003723">
    <property type="term" value="F:RNA binding"/>
    <property type="evidence" value="ECO:0007669"/>
    <property type="project" value="UniProtKB-KW"/>
</dbReference>
<dbReference type="GO" id="GO:0008270">
    <property type="term" value="F:zinc ion binding"/>
    <property type="evidence" value="ECO:0007669"/>
    <property type="project" value="UniProtKB-KW"/>
</dbReference>
<dbReference type="GO" id="GO:0000398">
    <property type="term" value="P:mRNA splicing, via spliceosome"/>
    <property type="evidence" value="ECO:0007669"/>
    <property type="project" value="InterPro"/>
</dbReference>
<dbReference type="CDD" id="cd12393">
    <property type="entry name" value="RRM_ZCRB1"/>
    <property type="match status" value="1"/>
</dbReference>
<dbReference type="FunFam" id="3.30.70.330:FF:000233">
    <property type="entry name" value="Zinc finger CCHC-type and RNA-binding motif-containing protein 1"/>
    <property type="match status" value="1"/>
</dbReference>
<dbReference type="FunFam" id="4.10.60.10:FF:000009">
    <property type="entry name" value="Zinc finger CCHC-type and RNA-binding motif-containing protein 1"/>
    <property type="match status" value="1"/>
</dbReference>
<dbReference type="Gene3D" id="3.30.70.330">
    <property type="match status" value="1"/>
</dbReference>
<dbReference type="Gene3D" id="4.10.60.10">
    <property type="entry name" value="Zinc finger, CCHC-type"/>
    <property type="match status" value="1"/>
</dbReference>
<dbReference type="InterPro" id="IPR012677">
    <property type="entry name" value="Nucleotide-bd_a/b_plait_sf"/>
</dbReference>
<dbReference type="InterPro" id="IPR035979">
    <property type="entry name" value="RBD_domain_sf"/>
</dbReference>
<dbReference type="InterPro" id="IPR000504">
    <property type="entry name" value="RRM_dom"/>
</dbReference>
<dbReference type="InterPro" id="IPR003954">
    <property type="entry name" value="RRM_dom_euk"/>
</dbReference>
<dbReference type="InterPro" id="IPR044598">
    <property type="entry name" value="ZCRB1"/>
</dbReference>
<dbReference type="InterPro" id="IPR034219">
    <property type="entry name" value="ZCRB1_RRM"/>
</dbReference>
<dbReference type="InterPro" id="IPR001878">
    <property type="entry name" value="Znf_CCHC"/>
</dbReference>
<dbReference type="InterPro" id="IPR036875">
    <property type="entry name" value="Znf_CCHC_sf"/>
</dbReference>
<dbReference type="PANTHER" id="PTHR46259">
    <property type="entry name" value="ZINC FINGER CCHC-TYPE AND RNA-BINDING MOTIF-CONTAINING PROTEIN 1"/>
    <property type="match status" value="1"/>
</dbReference>
<dbReference type="PANTHER" id="PTHR46259:SF1">
    <property type="entry name" value="ZINC FINGER CCHC-TYPE AND RNA-BINDING MOTIF-CONTAINING PROTEIN 1"/>
    <property type="match status" value="1"/>
</dbReference>
<dbReference type="Pfam" id="PF00076">
    <property type="entry name" value="RRM_1"/>
    <property type="match status" value="1"/>
</dbReference>
<dbReference type="Pfam" id="PF00098">
    <property type="entry name" value="zf-CCHC"/>
    <property type="match status" value="1"/>
</dbReference>
<dbReference type="SMART" id="SM00360">
    <property type="entry name" value="RRM"/>
    <property type="match status" value="1"/>
</dbReference>
<dbReference type="SMART" id="SM00361">
    <property type="entry name" value="RRM_1"/>
    <property type="match status" value="1"/>
</dbReference>
<dbReference type="SMART" id="SM00343">
    <property type="entry name" value="ZnF_C2HC"/>
    <property type="match status" value="1"/>
</dbReference>
<dbReference type="SUPFAM" id="SSF57756">
    <property type="entry name" value="Retrovirus zinc finger-like domains"/>
    <property type="match status" value="1"/>
</dbReference>
<dbReference type="SUPFAM" id="SSF54928">
    <property type="entry name" value="RNA-binding domain, RBD"/>
    <property type="match status" value="1"/>
</dbReference>
<dbReference type="PROSITE" id="PS50102">
    <property type="entry name" value="RRM"/>
    <property type="match status" value="1"/>
</dbReference>
<dbReference type="PROSITE" id="PS50158">
    <property type="entry name" value="ZF_CCHC"/>
    <property type="match status" value="1"/>
</dbReference>
<comment type="subunit">
    <text evidence="1">Component of the U11/U12 snRNPs that are part of the U12-type spliceosome.</text>
</comment>
<comment type="subcellular location">
    <subcellularLocation>
        <location evidence="1">Nucleus</location>
    </subcellularLocation>
</comment>
<sequence length="218" mass="24881">MSGGLAPSKSTVYVSNLPFSLTNNDLHRIFSKYGKVVKVTILKDKDSRKSKGVSFVLFLDKESAQNCVRGLNNKQLFGRAIKASIAKDNGRATEFIRRRNYTDKSRCYECGDTGHLSYACPKNMLGEREPPQKKEKKKRKRLVEEEEEEVVEEEESEDEGEDPALDSLSQAIAFQQARIDEEKNKYRHDPAEASTSEDSRRPRIKKSTYFSDEDELSD</sequence>
<reference key="1">
    <citation type="submission" date="2004-06" db="EMBL/GenBank/DDBJ databases">
        <authorList>
            <consortium name="NIH - Xenopus Gene Collection (XGC) project"/>
        </authorList>
    </citation>
    <scope>NUCLEOTIDE SEQUENCE [LARGE SCALE MRNA]</scope>
    <source>
        <tissue>Kidney</tissue>
    </source>
</reference>
<feature type="chain" id="PRO_0000252377" description="Zinc finger CCHC-type and RNA-binding motif-containing protein 1">
    <location>
        <begin position="1"/>
        <end position="218"/>
    </location>
</feature>
<feature type="domain" description="RRM" evidence="4">
    <location>
        <begin position="10"/>
        <end position="88"/>
    </location>
</feature>
<feature type="zinc finger region" description="CCHC-type" evidence="3">
    <location>
        <begin position="105"/>
        <end position="122"/>
    </location>
</feature>
<feature type="region of interest" description="Disordered" evidence="5">
    <location>
        <begin position="119"/>
        <end position="218"/>
    </location>
</feature>
<feature type="coiled-coil region" evidence="2">
    <location>
        <begin position="132"/>
        <end position="188"/>
    </location>
</feature>
<feature type="compositionally biased region" description="Acidic residues" evidence="5">
    <location>
        <begin position="144"/>
        <end position="164"/>
    </location>
</feature>
<feature type="compositionally biased region" description="Basic and acidic residues" evidence="5">
    <location>
        <begin position="178"/>
        <end position="201"/>
    </location>
</feature>
<accession>Q6DJI9</accession>
<evidence type="ECO:0000250" key="1"/>
<evidence type="ECO:0000255" key="2"/>
<evidence type="ECO:0000255" key="3">
    <source>
        <dbReference type="PROSITE-ProRule" id="PRU00047"/>
    </source>
</evidence>
<evidence type="ECO:0000255" key="4">
    <source>
        <dbReference type="PROSITE-ProRule" id="PRU00176"/>
    </source>
</evidence>
<evidence type="ECO:0000256" key="5">
    <source>
        <dbReference type="SAM" id="MobiDB-lite"/>
    </source>
</evidence>
<organism>
    <name type="scientific">Xenopus laevis</name>
    <name type="common">African clawed frog</name>
    <dbReference type="NCBI Taxonomy" id="8355"/>
    <lineage>
        <taxon>Eukaryota</taxon>
        <taxon>Metazoa</taxon>
        <taxon>Chordata</taxon>
        <taxon>Craniata</taxon>
        <taxon>Vertebrata</taxon>
        <taxon>Euteleostomi</taxon>
        <taxon>Amphibia</taxon>
        <taxon>Batrachia</taxon>
        <taxon>Anura</taxon>
        <taxon>Pipoidea</taxon>
        <taxon>Pipidae</taxon>
        <taxon>Xenopodinae</taxon>
        <taxon>Xenopus</taxon>
        <taxon>Xenopus</taxon>
    </lineage>
</organism>
<name>ZCRB1_XENLA</name>
<keyword id="KW-0175">Coiled coil</keyword>
<keyword id="KW-0479">Metal-binding</keyword>
<keyword id="KW-0507">mRNA processing</keyword>
<keyword id="KW-0508">mRNA splicing</keyword>
<keyword id="KW-0539">Nucleus</keyword>
<keyword id="KW-1185">Reference proteome</keyword>
<keyword id="KW-0694">RNA-binding</keyword>
<keyword id="KW-0747">Spliceosome</keyword>
<keyword id="KW-0862">Zinc</keyword>
<keyword id="KW-0863">Zinc-finger</keyword>
<protein>
    <recommendedName>
        <fullName>Zinc finger CCHC-type and RNA-binding motif-containing protein 1</fullName>
    </recommendedName>
    <alternativeName>
        <fullName>U11/U12 small nuclear ribonucleoprotein 31 kDa protein</fullName>
        <shortName>U11/U12 snRNP 31 kDa protein</shortName>
    </alternativeName>
</protein>
<proteinExistence type="evidence at transcript level"/>